<sequence>MISNIRDLKQHVGETVTLQAWLTDKSGKGKIQFLKLRDGSGFVQATVFKNDVEEEVFESAKRLTQEQALTLTGEVRADERAPGGVELSVRRLSPISENHAEYPITPKEHGIEFLMDQRHLWLRHRRPWAIMRIRDCVQRAIVDFFHSEGFVRFDAPFFTPNAAEGTTELFEIDLFGEDKAYLSQTGQLHAEAGAFAFGKVYTFGPTFRAEKSKTRRHLLEFWMVEPEVAPSNHKQNMDLQERFVSFLVRRALDECTVELEMLGRDLSKLKGAAEGNYPRVTYTEALEIVRQHIENKDLPPNVQEDVQPVEWGDDLGAPHETILGHHFDRPVMIEKYPAAIKAFYMQPDPEDSRVALCDDMIAPEGYGEIIGGSERIHDYDLLKSRIEHEGLPLEAFDWYLDLRRVGSVPHAGFGMGLERVIAWISGIDHIREAIPFPRMLTRMRP</sequence>
<dbReference type="EC" id="6.1.1.22" evidence="1"/>
<dbReference type="EMBL" id="CP001114">
    <property type="protein sequence ID" value="ACO46043.1"/>
    <property type="molecule type" value="Genomic_DNA"/>
</dbReference>
<dbReference type="RefSeq" id="WP_012693166.1">
    <property type="nucleotide sequence ID" value="NC_012526.1"/>
</dbReference>
<dbReference type="SMR" id="C1CV26"/>
<dbReference type="STRING" id="546414.Deide_11380"/>
<dbReference type="PaxDb" id="546414-Deide_11380"/>
<dbReference type="KEGG" id="ddr:Deide_11380"/>
<dbReference type="eggNOG" id="COG0017">
    <property type="taxonomic scope" value="Bacteria"/>
</dbReference>
<dbReference type="HOGENOM" id="CLU_004553_2_0_0"/>
<dbReference type="OrthoDB" id="9762036at2"/>
<dbReference type="Proteomes" id="UP000002208">
    <property type="component" value="Chromosome"/>
</dbReference>
<dbReference type="GO" id="GO:0005737">
    <property type="term" value="C:cytoplasm"/>
    <property type="evidence" value="ECO:0007669"/>
    <property type="project" value="UniProtKB-SubCell"/>
</dbReference>
<dbReference type="GO" id="GO:0004816">
    <property type="term" value="F:asparagine-tRNA ligase activity"/>
    <property type="evidence" value="ECO:0007669"/>
    <property type="project" value="UniProtKB-UniRule"/>
</dbReference>
<dbReference type="GO" id="GO:0005524">
    <property type="term" value="F:ATP binding"/>
    <property type="evidence" value="ECO:0007669"/>
    <property type="project" value="UniProtKB-UniRule"/>
</dbReference>
<dbReference type="GO" id="GO:0003676">
    <property type="term" value="F:nucleic acid binding"/>
    <property type="evidence" value="ECO:0007669"/>
    <property type="project" value="InterPro"/>
</dbReference>
<dbReference type="GO" id="GO:0006421">
    <property type="term" value="P:asparaginyl-tRNA aminoacylation"/>
    <property type="evidence" value="ECO:0007669"/>
    <property type="project" value="UniProtKB-UniRule"/>
</dbReference>
<dbReference type="CDD" id="cd04323">
    <property type="entry name" value="AsnRS_cyto_like_N"/>
    <property type="match status" value="1"/>
</dbReference>
<dbReference type="CDD" id="cd00776">
    <property type="entry name" value="AsxRS_core"/>
    <property type="match status" value="1"/>
</dbReference>
<dbReference type="Gene3D" id="3.30.930.10">
    <property type="entry name" value="Bira Bifunctional Protein, Domain 2"/>
    <property type="match status" value="1"/>
</dbReference>
<dbReference type="Gene3D" id="2.40.50.140">
    <property type="entry name" value="Nucleic acid-binding proteins"/>
    <property type="match status" value="1"/>
</dbReference>
<dbReference type="HAMAP" id="MF_00534">
    <property type="entry name" value="Asn_tRNA_synth"/>
    <property type="match status" value="1"/>
</dbReference>
<dbReference type="InterPro" id="IPR004364">
    <property type="entry name" value="Aa-tRNA-synt_II"/>
</dbReference>
<dbReference type="InterPro" id="IPR006195">
    <property type="entry name" value="aa-tRNA-synth_II"/>
</dbReference>
<dbReference type="InterPro" id="IPR045864">
    <property type="entry name" value="aa-tRNA-synth_II/BPL/LPL"/>
</dbReference>
<dbReference type="InterPro" id="IPR004522">
    <property type="entry name" value="Asn-tRNA-ligase"/>
</dbReference>
<dbReference type="InterPro" id="IPR002312">
    <property type="entry name" value="Asp/Asn-tRNA-synth_IIb"/>
</dbReference>
<dbReference type="InterPro" id="IPR012340">
    <property type="entry name" value="NA-bd_OB-fold"/>
</dbReference>
<dbReference type="InterPro" id="IPR004365">
    <property type="entry name" value="NA-bd_OB_tRNA"/>
</dbReference>
<dbReference type="NCBIfam" id="TIGR00457">
    <property type="entry name" value="asnS"/>
    <property type="match status" value="1"/>
</dbReference>
<dbReference type="NCBIfam" id="NF003037">
    <property type="entry name" value="PRK03932.1"/>
    <property type="match status" value="1"/>
</dbReference>
<dbReference type="PANTHER" id="PTHR22594:SF34">
    <property type="entry name" value="ASPARAGINE--TRNA LIGASE, MITOCHONDRIAL-RELATED"/>
    <property type="match status" value="1"/>
</dbReference>
<dbReference type="PANTHER" id="PTHR22594">
    <property type="entry name" value="ASPARTYL/LYSYL-TRNA SYNTHETASE"/>
    <property type="match status" value="1"/>
</dbReference>
<dbReference type="Pfam" id="PF00152">
    <property type="entry name" value="tRNA-synt_2"/>
    <property type="match status" value="1"/>
</dbReference>
<dbReference type="Pfam" id="PF01336">
    <property type="entry name" value="tRNA_anti-codon"/>
    <property type="match status" value="1"/>
</dbReference>
<dbReference type="PRINTS" id="PR01042">
    <property type="entry name" value="TRNASYNTHASP"/>
</dbReference>
<dbReference type="SUPFAM" id="SSF55681">
    <property type="entry name" value="Class II aaRS and biotin synthetases"/>
    <property type="match status" value="1"/>
</dbReference>
<dbReference type="SUPFAM" id="SSF50249">
    <property type="entry name" value="Nucleic acid-binding proteins"/>
    <property type="match status" value="1"/>
</dbReference>
<dbReference type="PROSITE" id="PS50862">
    <property type="entry name" value="AA_TRNA_LIGASE_II"/>
    <property type="match status" value="1"/>
</dbReference>
<evidence type="ECO:0000255" key="1">
    <source>
        <dbReference type="HAMAP-Rule" id="MF_00534"/>
    </source>
</evidence>
<organism>
    <name type="scientific">Deinococcus deserti (strain DSM 17065 / CIP 109153 / LMG 22923 / VCD115)</name>
    <dbReference type="NCBI Taxonomy" id="546414"/>
    <lineage>
        <taxon>Bacteria</taxon>
        <taxon>Thermotogati</taxon>
        <taxon>Deinococcota</taxon>
        <taxon>Deinococci</taxon>
        <taxon>Deinococcales</taxon>
        <taxon>Deinococcaceae</taxon>
        <taxon>Deinococcus</taxon>
    </lineage>
</organism>
<proteinExistence type="inferred from homology"/>
<keyword id="KW-0030">Aminoacyl-tRNA synthetase</keyword>
<keyword id="KW-0067">ATP-binding</keyword>
<keyword id="KW-0963">Cytoplasm</keyword>
<keyword id="KW-0436">Ligase</keyword>
<keyword id="KW-0547">Nucleotide-binding</keyword>
<keyword id="KW-0648">Protein biosynthesis</keyword>
<keyword id="KW-1185">Reference proteome</keyword>
<name>SYN_DEIDV</name>
<protein>
    <recommendedName>
        <fullName evidence="1">Asparagine--tRNA ligase</fullName>
        <ecNumber evidence="1">6.1.1.22</ecNumber>
    </recommendedName>
    <alternativeName>
        <fullName evidence="1">Asparaginyl-tRNA synthetase</fullName>
        <shortName evidence="1">AsnRS</shortName>
    </alternativeName>
</protein>
<accession>C1CV26</accession>
<comment type="catalytic activity">
    <reaction evidence="1">
        <text>tRNA(Asn) + L-asparagine + ATP = L-asparaginyl-tRNA(Asn) + AMP + diphosphate + H(+)</text>
        <dbReference type="Rhea" id="RHEA:11180"/>
        <dbReference type="Rhea" id="RHEA-COMP:9659"/>
        <dbReference type="Rhea" id="RHEA-COMP:9674"/>
        <dbReference type="ChEBI" id="CHEBI:15378"/>
        <dbReference type="ChEBI" id="CHEBI:30616"/>
        <dbReference type="ChEBI" id="CHEBI:33019"/>
        <dbReference type="ChEBI" id="CHEBI:58048"/>
        <dbReference type="ChEBI" id="CHEBI:78442"/>
        <dbReference type="ChEBI" id="CHEBI:78515"/>
        <dbReference type="ChEBI" id="CHEBI:456215"/>
        <dbReference type="EC" id="6.1.1.22"/>
    </reaction>
</comment>
<comment type="subunit">
    <text evidence="1">Homodimer.</text>
</comment>
<comment type="subcellular location">
    <subcellularLocation>
        <location evidence="1">Cytoplasm</location>
    </subcellularLocation>
</comment>
<comment type="similarity">
    <text evidence="1">Belongs to the class-II aminoacyl-tRNA synthetase family.</text>
</comment>
<gene>
    <name evidence="1" type="primary">asnS</name>
    <name type="ordered locus">Deide_11380</name>
</gene>
<feature type="chain" id="PRO_1000211901" description="Asparagine--tRNA ligase">
    <location>
        <begin position="1"/>
        <end position="445"/>
    </location>
</feature>
<reference key="1">
    <citation type="journal article" date="2009" name="PLoS Genet.">
        <title>Alliance of proteomics and genomics to unravel the specificities of Sahara bacterium Deinococcus deserti.</title>
        <authorList>
            <person name="de Groot A."/>
            <person name="Dulermo R."/>
            <person name="Ortet P."/>
            <person name="Blanchard L."/>
            <person name="Guerin P."/>
            <person name="Fernandez B."/>
            <person name="Vacherie B."/>
            <person name="Dossat C."/>
            <person name="Jolivet E."/>
            <person name="Siguier P."/>
            <person name="Chandler M."/>
            <person name="Barakat M."/>
            <person name="Dedieu A."/>
            <person name="Barbe V."/>
            <person name="Heulin T."/>
            <person name="Sommer S."/>
            <person name="Achouak W."/>
            <person name="Armengaud J."/>
        </authorList>
    </citation>
    <scope>NUCLEOTIDE SEQUENCE [LARGE SCALE GENOMIC DNA]</scope>
    <source>
        <strain>DSM 17065 / CIP 109153 / LMG 22923 / VCD115</strain>
    </source>
</reference>